<name>RS20_HALOH</name>
<protein>
    <recommendedName>
        <fullName evidence="1">Small ribosomal subunit protein bS20</fullName>
    </recommendedName>
    <alternativeName>
        <fullName evidence="2">30S ribosomal protein S20</fullName>
    </alternativeName>
</protein>
<organism>
    <name type="scientific">Halothermothrix orenii (strain H 168 / OCM 544 / DSM 9562)</name>
    <dbReference type="NCBI Taxonomy" id="373903"/>
    <lineage>
        <taxon>Bacteria</taxon>
        <taxon>Bacillati</taxon>
        <taxon>Bacillota</taxon>
        <taxon>Clostridia</taxon>
        <taxon>Halanaerobiales</taxon>
        <taxon>Halothermotrichaceae</taxon>
        <taxon>Halothermothrix</taxon>
    </lineage>
</organism>
<gene>
    <name evidence="1" type="primary">rpsT</name>
    <name type="ordered locus">Hore_12880</name>
</gene>
<feature type="chain" id="PRO_1000194248" description="Small ribosomal subunit protein bS20">
    <location>
        <begin position="1"/>
        <end position="87"/>
    </location>
</feature>
<keyword id="KW-1185">Reference proteome</keyword>
<keyword id="KW-0687">Ribonucleoprotein</keyword>
<keyword id="KW-0689">Ribosomal protein</keyword>
<keyword id="KW-0694">RNA-binding</keyword>
<keyword id="KW-0699">rRNA-binding</keyword>
<proteinExistence type="inferred from homology"/>
<accession>B8CXL9</accession>
<reference key="1">
    <citation type="journal article" date="2009" name="PLoS ONE">
        <title>Genome analysis of the anaerobic thermohalophilic bacterium Halothermothrix orenii.</title>
        <authorList>
            <person name="Mavromatis K."/>
            <person name="Ivanova N."/>
            <person name="Anderson I."/>
            <person name="Lykidis A."/>
            <person name="Hooper S.D."/>
            <person name="Sun H."/>
            <person name="Kunin V."/>
            <person name="Lapidus A."/>
            <person name="Hugenholtz P."/>
            <person name="Patel B."/>
            <person name="Kyrpides N.C."/>
        </authorList>
    </citation>
    <scope>NUCLEOTIDE SEQUENCE [LARGE SCALE GENOMIC DNA]</scope>
    <source>
        <strain>H 168 / OCM 544 / DSM 9562</strain>
    </source>
</reference>
<dbReference type="EMBL" id="CP001098">
    <property type="protein sequence ID" value="ACL70038.1"/>
    <property type="molecule type" value="Genomic_DNA"/>
</dbReference>
<dbReference type="RefSeq" id="WP_012636222.1">
    <property type="nucleotide sequence ID" value="NC_011899.1"/>
</dbReference>
<dbReference type="SMR" id="B8CXL9"/>
<dbReference type="STRING" id="373903.Hore_12880"/>
<dbReference type="KEGG" id="hor:Hore_12880"/>
<dbReference type="eggNOG" id="COG0268">
    <property type="taxonomic scope" value="Bacteria"/>
</dbReference>
<dbReference type="HOGENOM" id="CLU_160655_1_0_9"/>
<dbReference type="OrthoDB" id="9808392at2"/>
<dbReference type="Proteomes" id="UP000000719">
    <property type="component" value="Chromosome"/>
</dbReference>
<dbReference type="GO" id="GO:0005829">
    <property type="term" value="C:cytosol"/>
    <property type="evidence" value="ECO:0007669"/>
    <property type="project" value="TreeGrafter"/>
</dbReference>
<dbReference type="GO" id="GO:0015935">
    <property type="term" value="C:small ribosomal subunit"/>
    <property type="evidence" value="ECO:0007669"/>
    <property type="project" value="TreeGrafter"/>
</dbReference>
<dbReference type="GO" id="GO:0070181">
    <property type="term" value="F:small ribosomal subunit rRNA binding"/>
    <property type="evidence" value="ECO:0007669"/>
    <property type="project" value="TreeGrafter"/>
</dbReference>
<dbReference type="GO" id="GO:0003735">
    <property type="term" value="F:structural constituent of ribosome"/>
    <property type="evidence" value="ECO:0007669"/>
    <property type="project" value="InterPro"/>
</dbReference>
<dbReference type="GO" id="GO:0006412">
    <property type="term" value="P:translation"/>
    <property type="evidence" value="ECO:0007669"/>
    <property type="project" value="UniProtKB-UniRule"/>
</dbReference>
<dbReference type="FunFam" id="1.20.58.110:FF:000001">
    <property type="entry name" value="30S ribosomal protein S20"/>
    <property type="match status" value="1"/>
</dbReference>
<dbReference type="Gene3D" id="1.20.58.110">
    <property type="entry name" value="Ribosomal protein S20"/>
    <property type="match status" value="1"/>
</dbReference>
<dbReference type="HAMAP" id="MF_00500">
    <property type="entry name" value="Ribosomal_bS20"/>
    <property type="match status" value="1"/>
</dbReference>
<dbReference type="InterPro" id="IPR002583">
    <property type="entry name" value="Ribosomal_bS20"/>
</dbReference>
<dbReference type="InterPro" id="IPR036510">
    <property type="entry name" value="Ribosomal_bS20_sf"/>
</dbReference>
<dbReference type="NCBIfam" id="TIGR00029">
    <property type="entry name" value="S20"/>
    <property type="match status" value="1"/>
</dbReference>
<dbReference type="PANTHER" id="PTHR33398">
    <property type="entry name" value="30S RIBOSOMAL PROTEIN S20"/>
    <property type="match status" value="1"/>
</dbReference>
<dbReference type="PANTHER" id="PTHR33398:SF1">
    <property type="entry name" value="SMALL RIBOSOMAL SUBUNIT PROTEIN BS20C"/>
    <property type="match status" value="1"/>
</dbReference>
<dbReference type="Pfam" id="PF01649">
    <property type="entry name" value="Ribosomal_S20p"/>
    <property type="match status" value="1"/>
</dbReference>
<dbReference type="SUPFAM" id="SSF46992">
    <property type="entry name" value="Ribosomal protein S20"/>
    <property type="match status" value="1"/>
</dbReference>
<sequence length="87" mass="10092">MPIIKSAKKRVRITEKRTAYNREWKEKIKQAIKEFEKVVEEGNVEEAEAKLREASKILDKSAGKGIIHKNKAARKKSQLTRQFNKIA</sequence>
<comment type="function">
    <text evidence="1">Binds directly to 16S ribosomal RNA.</text>
</comment>
<comment type="similarity">
    <text evidence="1">Belongs to the bacterial ribosomal protein bS20 family.</text>
</comment>
<evidence type="ECO:0000255" key="1">
    <source>
        <dbReference type="HAMAP-Rule" id="MF_00500"/>
    </source>
</evidence>
<evidence type="ECO:0000305" key="2"/>